<organism>
    <name type="scientific">Escherichia coli O6:H1 (strain CFT073 / ATCC 700928 / UPEC)</name>
    <dbReference type="NCBI Taxonomy" id="199310"/>
    <lineage>
        <taxon>Bacteria</taxon>
        <taxon>Pseudomonadati</taxon>
        <taxon>Pseudomonadota</taxon>
        <taxon>Gammaproteobacteria</taxon>
        <taxon>Enterobacterales</taxon>
        <taxon>Enterobacteriaceae</taxon>
        <taxon>Escherichia</taxon>
    </lineage>
</organism>
<sequence length="113" mass="12697">MHELSLCQSAVEIIQRQAEQHDVKRVTAVWLEIGALSCVEESAVRFSFEIVCHGTVAQGCDLHIVYKPAQAWCWDCSQVVEIHQHDAQCPICHGERLRVDTGDSLIVKSIEVE</sequence>
<accession>Q8FDM1</accession>
<dbReference type="EMBL" id="AE014075">
    <property type="protein sequence ID" value="AAN82172.1"/>
    <property type="molecule type" value="Genomic_DNA"/>
</dbReference>
<dbReference type="SMR" id="Q8FDM1"/>
<dbReference type="STRING" id="199310.c3728"/>
<dbReference type="KEGG" id="ecc:c3728"/>
<dbReference type="eggNOG" id="COG0375">
    <property type="taxonomic scope" value="Bacteria"/>
</dbReference>
<dbReference type="HOGENOM" id="CLU_126929_0_0_6"/>
<dbReference type="BioCyc" id="ECOL199310:C3728-MONOMER"/>
<dbReference type="Proteomes" id="UP000001410">
    <property type="component" value="Chromosome"/>
</dbReference>
<dbReference type="GO" id="GO:0016151">
    <property type="term" value="F:nickel cation binding"/>
    <property type="evidence" value="ECO:0007669"/>
    <property type="project" value="UniProtKB-UniRule"/>
</dbReference>
<dbReference type="GO" id="GO:0008270">
    <property type="term" value="F:zinc ion binding"/>
    <property type="evidence" value="ECO:0007669"/>
    <property type="project" value="UniProtKB-UniRule"/>
</dbReference>
<dbReference type="GO" id="GO:0051604">
    <property type="term" value="P:protein maturation"/>
    <property type="evidence" value="ECO:0007669"/>
    <property type="project" value="InterPro"/>
</dbReference>
<dbReference type="GO" id="GO:0036211">
    <property type="term" value="P:protein modification process"/>
    <property type="evidence" value="ECO:0007669"/>
    <property type="project" value="UniProtKB-UniRule"/>
</dbReference>
<dbReference type="FunFam" id="3.30.2320.80:FF:000001">
    <property type="entry name" value="Hydrogenase maturation factor HypA"/>
    <property type="match status" value="1"/>
</dbReference>
<dbReference type="Gene3D" id="3.30.2320.80">
    <property type="match status" value="1"/>
</dbReference>
<dbReference type="HAMAP" id="MF_02099">
    <property type="entry name" value="HybF_subfam"/>
    <property type="match status" value="1"/>
</dbReference>
<dbReference type="HAMAP" id="MF_00213">
    <property type="entry name" value="HypA_HybF"/>
    <property type="match status" value="1"/>
</dbReference>
<dbReference type="InterPro" id="IPR039002">
    <property type="entry name" value="HybF"/>
</dbReference>
<dbReference type="InterPro" id="IPR020538">
    <property type="entry name" value="Hydgase_Ni_incorp_HypA/HybF_CS"/>
</dbReference>
<dbReference type="InterPro" id="IPR000688">
    <property type="entry name" value="HypA/HybF"/>
</dbReference>
<dbReference type="NCBIfam" id="TIGR00100">
    <property type="entry name" value="hypA"/>
    <property type="match status" value="1"/>
</dbReference>
<dbReference type="NCBIfam" id="NF002979">
    <property type="entry name" value="PRK03681.1"/>
    <property type="match status" value="1"/>
</dbReference>
<dbReference type="NCBIfam" id="NF009046">
    <property type="entry name" value="PRK12380.1"/>
    <property type="match status" value="1"/>
</dbReference>
<dbReference type="PANTHER" id="PTHR34535:SF4">
    <property type="entry name" value="HYDROGENASE MATURATION FACTOR HYBF"/>
    <property type="match status" value="1"/>
</dbReference>
<dbReference type="PANTHER" id="PTHR34535">
    <property type="entry name" value="HYDROGENASE MATURATION FACTOR HYPA"/>
    <property type="match status" value="1"/>
</dbReference>
<dbReference type="Pfam" id="PF01155">
    <property type="entry name" value="HypA"/>
    <property type="match status" value="1"/>
</dbReference>
<dbReference type="PIRSF" id="PIRSF004761">
    <property type="entry name" value="Hydrgn_mat_HypA"/>
    <property type="match status" value="1"/>
</dbReference>
<dbReference type="PROSITE" id="PS01249">
    <property type="entry name" value="HYPA"/>
    <property type="match status" value="1"/>
</dbReference>
<gene>
    <name evidence="1" type="primary">hybF</name>
    <name type="ordered locus">c3728</name>
</gene>
<protein>
    <recommendedName>
        <fullName evidence="1">Hydrogenase maturation factor HybF</fullName>
    </recommendedName>
</protein>
<reference key="1">
    <citation type="journal article" date="2002" name="Proc. Natl. Acad. Sci. U.S.A.">
        <title>Extensive mosaic structure revealed by the complete genome sequence of uropathogenic Escherichia coli.</title>
        <authorList>
            <person name="Welch R.A."/>
            <person name="Burland V."/>
            <person name="Plunkett G. III"/>
            <person name="Redford P."/>
            <person name="Roesch P."/>
            <person name="Rasko D."/>
            <person name="Buckles E.L."/>
            <person name="Liou S.-R."/>
            <person name="Boutin A."/>
            <person name="Hackett J."/>
            <person name="Stroud D."/>
            <person name="Mayhew G.F."/>
            <person name="Rose D.J."/>
            <person name="Zhou S."/>
            <person name="Schwartz D.C."/>
            <person name="Perna N.T."/>
            <person name="Mobley H.L.T."/>
            <person name="Donnenberg M.S."/>
            <person name="Blattner F.R."/>
        </authorList>
    </citation>
    <scope>NUCLEOTIDE SEQUENCE [LARGE SCALE GENOMIC DNA]</scope>
    <source>
        <strain>CFT073 / ATCC 700928 / UPEC</strain>
    </source>
</reference>
<keyword id="KW-0479">Metal-binding</keyword>
<keyword id="KW-0533">Nickel</keyword>
<keyword id="KW-1185">Reference proteome</keyword>
<keyword id="KW-0862">Zinc</keyword>
<proteinExistence type="inferred from homology"/>
<feature type="chain" id="PRO_0000129064" description="Hydrogenase maturation factor HybF">
    <location>
        <begin position="1"/>
        <end position="113"/>
    </location>
</feature>
<feature type="binding site" evidence="1">
    <location>
        <position position="2"/>
    </location>
    <ligand>
        <name>Ni(2+)</name>
        <dbReference type="ChEBI" id="CHEBI:49786"/>
    </ligand>
</feature>
<feature type="binding site" evidence="1">
    <location>
        <position position="3"/>
    </location>
    <ligand>
        <name>Ni(2+)</name>
        <dbReference type="ChEBI" id="CHEBI:49786"/>
    </ligand>
</feature>
<feature type="binding site" evidence="1">
    <location>
        <position position="73"/>
    </location>
    <ligand>
        <name>Zn(2+)</name>
        <dbReference type="ChEBI" id="CHEBI:29105"/>
    </ligand>
</feature>
<feature type="binding site" evidence="1">
    <location>
        <position position="76"/>
    </location>
    <ligand>
        <name>Zn(2+)</name>
        <dbReference type="ChEBI" id="CHEBI:29105"/>
    </ligand>
</feature>
<feature type="binding site" evidence="1">
    <location>
        <position position="89"/>
    </location>
    <ligand>
        <name>Zn(2+)</name>
        <dbReference type="ChEBI" id="CHEBI:29105"/>
    </ligand>
</feature>
<feature type="binding site" evidence="1">
    <location>
        <position position="92"/>
    </location>
    <ligand>
        <name>Zn(2+)</name>
        <dbReference type="ChEBI" id="CHEBI:29105"/>
    </ligand>
</feature>
<comment type="function">
    <text evidence="1">Involved in the maturation of [NiFe] hydrogenases. Required for nickel insertion into the metal center of the hydrogenase.</text>
</comment>
<comment type="similarity">
    <text evidence="1">Belongs to the HypA/HybF family. HybF subfamily.</text>
</comment>
<evidence type="ECO:0000255" key="1">
    <source>
        <dbReference type="HAMAP-Rule" id="MF_02099"/>
    </source>
</evidence>
<name>HYBF_ECOL6</name>